<name>NAGS_PENRW</name>
<sequence length="769" mass="84488">MEVPVDFPISWPCCDTLHAVDPLISLYGVSQKRDEECTHILNASYQSWYPQAVSYNRGSMDASYYFSFSLPWNLPSYIQYLVRPNDPIAVRPTQVLNVRAQQIAEFSGSSESQDRLGHRAKEKLLDREFFLSLLSSASTKREAKSYLARLKASPAKSGQEPTESPKESISASLPSGVNLGSFYGASRAVYDSPVFRQDTTPTPRAQDIPERLHLALIKITTPQLLDNSVINGVAKTLSQLVRLGMACCVVVDPGKTDGHAGRQTAIEQANRISAAVDEQPDSRSFRLDSALSISERGSGLPTVLSRKVLLSALQDGHVVLVPPIAYTEENPRAVTVSANDAALALTKEFAGLSFNPDPDEDPAVTAERIRNLQREVSLDRVIVLDALGGIPAFKGPQSSHVFINMEQEFDQIKDELSQVRNSVSSKQGTSEATYSTLESNPFSKFVNRELVLPEKPTAPPSPGAEVMEEVLDGHLENLRLAQQALAMLPSASSGIITSPQEVSYSARSPQQAASDLSAVGTRRQRNPLIHHLLTDKPLLSSSLPPGRRGAFNGSGSNQFNPVTSHTTFVKRGMPLTILPNPYTKPWRAQMQPRLGLNDPTIDLPRLVTLIEDSFDRKLDVQNYLERVNSRIAGVIVAGEYEGGAILTWETPPGVPDDGSEASAARMVPYLDKFAVLKRSQGAGGVADVVFNAMVRTCFPNGVCWRSRMDNPVNKWYFERSSGTWKLAGSNWAMFWTTPGLVEDTQRFQDYEAVCRSIQPSWADKKNVID</sequence>
<dbReference type="EC" id="2.3.1.1"/>
<dbReference type="EMBL" id="AM920430">
    <property type="protein sequence ID" value="CAP82892.1"/>
    <property type="molecule type" value="Genomic_DNA"/>
</dbReference>
<dbReference type="RefSeq" id="XP_002560234.1">
    <property type="nucleotide sequence ID" value="XM_002560188.1"/>
</dbReference>
<dbReference type="SMR" id="B6H6F3"/>
<dbReference type="STRING" id="500485.B6H6F3"/>
<dbReference type="VEuPathDB" id="FungiDB:PCH_Pc15g00060"/>
<dbReference type="eggNOG" id="KOG2436">
    <property type="taxonomic scope" value="Eukaryota"/>
</dbReference>
<dbReference type="HOGENOM" id="CLU_013088_0_0_1"/>
<dbReference type="OMA" id="NAMVRDC"/>
<dbReference type="OrthoDB" id="5585968at2759"/>
<dbReference type="BioCyc" id="PCHR:PC15G00060-MONOMER"/>
<dbReference type="UniPathway" id="UPA00068">
    <property type="reaction ID" value="UER00106"/>
</dbReference>
<dbReference type="Proteomes" id="UP000000724">
    <property type="component" value="Contig Pc00c15"/>
</dbReference>
<dbReference type="GO" id="GO:0005759">
    <property type="term" value="C:mitochondrial matrix"/>
    <property type="evidence" value="ECO:0007669"/>
    <property type="project" value="TreeGrafter"/>
</dbReference>
<dbReference type="GO" id="GO:0004042">
    <property type="term" value="F:L-glutamate N-acetyltransferase activity"/>
    <property type="evidence" value="ECO:0007669"/>
    <property type="project" value="InterPro"/>
</dbReference>
<dbReference type="GO" id="GO:0006526">
    <property type="term" value="P:L-arginine biosynthetic process"/>
    <property type="evidence" value="ECO:0007669"/>
    <property type="project" value="UniProtKB-UniPathway"/>
</dbReference>
<dbReference type="GO" id="GO:0006592">
    <property type="term" value="P:ornithine biosynthetic process"/>
    <property type="evidence" value="ECO:0007669"/>
    <property type="project" value="TreeGrafter"/>
</dbReference>
<dbReference type="FunFam" id="3.40.630.30:FF:000049">
    <property type="entry name" value="Amino-acid acetyltransferase, mitochondrial"/>
    <property type="match status" value="1"/>
</dbReference>
<dbReference type="Gene3D" id="3.40.630.30">
    <property type="match status" value="1"/>
</dbReference>
<dbReference type="Gene3D" id="3.40.1160.10">
    <property type="entry name" value="Acetylglutamate kinase-like"/>
    <property type="match status" value="1"/>
</dbReference>
<dbReference type="InterPro" id="IPR036393">
    <property type="entry name" value="AceGlu_kinase-like_sf"/>
</dbReference>
<dbReference type="InterPro" id="IPR011190">
    <property type="entry name" value="GlcNAc_Synth_fun"/>
</dbReference>
<dbReference type="InterPro" id="IPR006855">
    <property type="entry name" value="Vertebrate-like_GNAT_dom"/>
</dbReference>
<dbReference type="PANTHER" id="PTHR23342:SF4">
    <property type="entry name" value="AMINO-ACID ACETYLTRANSFERASE, MITOCHONDRIAL"/>
    <property type="match status" value="1"/>
</dbReference>
<dbReference type="PANTHER" id="PTHR23342">
    <property type="entry name" value="N-ACETYLGLUTAMATE SYNTHASE"/>
    <property type="match status" value="1"/>
</dbReference>
<dbReference type="Pfam" id="PF04768">
    <property type="entry name" value="NAT"/>
    <property type="match status" value="1"/>
</dbReference>
<dbReference type="PIRSF" id="PIRSF007892">
    <property type="entry name" value="NAGS_fungal"/>
    <property type="match status" value="1"/>
</dbReference>
<dbReference type="PROSITE" id="PS51731">
    <property type="entry name" value="GNAT_NAGS"/>
    <property type="match status" value="1"/>
</dbReference>
<gene>
    <name type="primary">arg2</name>
    <name type="ORF">Pc15g00060</name>
</gene>
<accession>B6H6F3</accession>
<keyword id="KW-0012">Acyltransferase</keyword>
<keyword id="KW-0028">Amino-acid biosynthesis</keyword>
<keyword id="KW-0496">Mitochondrion</keyword>
<keyword id="KW-1185">Reference proteome</keyword>
<keyword id="KW-0808">Transferase</keyword>
<keyword id="KW-0809">Transit peptide</keyword>
<comment type="function">
    <text evidence="1">N-acetylglutamate synthase involved in arginine biosynthesis.</text>
</comment>
<comment type="catalytic activity">
    <reaction>
        <text>L-glutamate + acetyl-CoA = N-acetyl-L-glutamate + CoA + H(+)</text>
        <dbReference type="Rhea" id="RHEA:24292"/>
        <dbReference type="ChEBI" id="CHEBI:15378"/>
        <dbReference type="ChEBI" id="CHEBI:29985"/>
        <dbReference type="ChEBI" id="CHEBI:44337"/>
        <dbReference type="ChEBI" id="CHEBI:57287"/>
        <dbReference type="ChEBI" id="CHEBI:57288"/>
        <dbReference type="EC" id="2.3.1.1"/>
    </reaction>
</comment>
<comment type="pathway">
    <text>Amino-acid biosynthesis; L-arginine biosynthesis; N(2)-acetyl-L-ornithine from L-glutamate: step 1/4.</text>
</comment>
<comment type="subcellular location">
    <subcellularLocation>
        <location evidence="1">Mitochondrion</location>
    </subcellularLocation>
</comment>
<comment type="similarity">
    <text evidence="5">Belongs to the acetyltransferase family.</text>
</comment>
<proteinExistence type="inferred from homology"/>
<organism>
    <name type="scientific">Penicillium rubens (strain ATCC 28089 / DSM 1075 / NRRL 1951 / Wisconsin 54-1255)</name>
    <name type="common">Penicillium chrysogenum</name>
    <dbReference type="NCBI Taxonomy" id="500485"/>
    <lineage>
        <taxon>Eukaryota</taxon>
        <taxon>Fungi</taxon>
        <taxon>Dikarya</taxon>
        <taxon>Ascomycota</taxon>
        <taxon>Pezizomycotina</taxon>
        <taxon>Eurotiomycetes</taxon>
        <taxon>Eurotiomycetidae</taxon>
        <taxon>Eurotiales</taxon>
        <taxon>Aspergillaceae</taxon>
        <taxon>Penicillium</taxon>
        <taxon>Penicillium chrysogenum species complex</taxon>
    </lineage>
</organism>
<feature type="transit peptide" description="Mitochondrion" evidence="2">
    <location>
        <begin position="1"/>
        <end status="unknown"/>
    </location>
</feature>
<feature type="chain" id="PRO_0000372570" description="Amino-acid acetyltransferase, mitochondrial">
    <location>
        <begin status="unknown"/>
        <end position="769"/>
    </location>
</feature>
<feature type="domain" description="N-acetyltransferase" evidence="3">
    <location>
        <begin position="590"/>
        <end position="759"/>
    </location>
</feature>
<feature type="region of interest" description="Disordered" evidence="4">
    <location>
        <begin position="150"/>
        <end position="172"/>
    </location>
</feature>
<feature type="compositionally biased region" description="Polar residues" evidence="4">
    <location>
        <begin position="159"/>
        <end position="172"/>
    </location>
</feature>
<protein>
    <recommendedName>
        <fullName>Amino-acid acetyltransferase, mitochondrial</fullName>
        <ecNumber>2.3.1.1</ecNumber>
    </recommendedName>
    <alternativeName>
        <fullName>Arginine-requiring protein 2</fullName>
    </alternativeName>
    <alternativeName>
        <fullName>Glutamate N-acetyltransferase</fullName>
    </alternativeName>
    <alternativeName>
        <fullName>N-acetylglutamate synthase</fullName>
        <shortName>AGS</shortName>
        <shortName>NAGS</shortName>
    </alternativeName>
</protein>
<evidence type="ECO:0000250" key="1"/>
<evidence type="ECO:0000255" key="2"/>
<evidence type="ECO:0000255" key="3">
    <source>
        <dbReference type="PROSITE-ProRule" id="PRU00532"/>
    </source>
</evidence>
<evidence type="ECO:0000256" key="4">
    <source>
        <dbReference type="SAM" id="MobiDB-lite"/>
    </source>
</evidence>
<evidence type="ECO:0000305" key="5"/>
<reference key="1">
    <citation type="journal article" date="2008" name="Nat. Biotechnol.">
        <title>Genome sequencing and analysis of the filamentous fungus Penicillium chrysogenum.</title>
        <authorList>
            <person name="van den Berg M.A."/>
            <person name="Albang R."/>
            <person name="Albermann K."/>
            <person name="Badger J.H."/>
            <person name="Daran J.-M."/>
            <person name="Driessen A.J.M."/>
            <person name="Garcia-Estrada C."/>
            <person name="Fedorova N.D."/>
            <person name="Harris D.M."/>
            <person name="Heijne W.H.M."/>
            <person name="Joardar V.S."/>
            <person name="Kiel J.A.K.W."/>
            <person name="Kovalchuk A."/>
            <person name="Martin J.F."/>
            <person name="Nierman W.C."/>
            <person name="Nijland J.G."/>
            <person name="Pronk J.T."/>
            <person name="Roubos J.A."/>
            <person name="van der Klei I.J."/>
            <person name="van Peij N.N.M.E."/>
            <person name="Veenhuis M."/>
            <person name="von Doehren H."/>
            <person name="Wagner C."/>
            <person name="Wortman J.R."/>
            <person name="Bovenberg R.A.L."/>
        </authorList>
    </citation>
    <scope>NUCLEOTIDE SEQUENCE [LARGE SCALE GENOMIC DNA]</scope>
    <source>
        <strain>ATCC 28089 / DSM 1075 / NRRL 1951 / Wisconsin 54-1255</strain>
    </source>
</reference>